<comment type="function">
    <text>Receptor for somatostatin with higher affinity for somatostatin-14 than -28. This receptor is coupled to phosphotyrosine phosphatase and Na(+)/H(+) exchanger via pertussis toxin insensitive G proteins.</text>
</comment>
<comment type="subcellular location">
    <subcellularLocation>
        <location>Cell membrane</location>
        <topology>Multi-pass membrane protein</topology>
    </subcellularLocation>
</comment>
<comment type="tissue specificity">
    <text>Brain, pituitary, islet, jejunum, stomach, heart, spleen.</text>
</comment>
<comment type="similarity">
    <text evidence="2">Belongs to the G-protein coupled receptor 1 family.</text>
</comment>
<proteinExistence type="evidence at transcript level"/>
<organism>
    <name type="scientific">Rattus norvegicus</name>
    <name type="common">Rat</name>
    <dbReference type="NCBI Taxonomy" id="10116"/>
    <lineage>
        <taxon>Eukaryota</taxon>
        <taxon>Metazoa</taxon>
        <taxon>Chordata</taxon>
        <taxon>Craniata</taxon>
        <taxon>Vertebrata</taxon>
        <taxon>Euteleostomi</taxon>
        <taxon>Mammalia</taxon>
        <taxon>Eutheria</taxon>
        <taxon>Euarchontoglires</taxon>
        <taxon>Glires</taxon>
        <taxon>Rodentia</taxon>
        <taxon>Myomorpha</taxon>
        <taxon>Muroidea</taxon>
        <taxon>Muridae</taxon>
        <taxon>Murinae</taxon>
        <taxon>Rattus</taxon>
    </lineage>
</organism>
<accession>P28646</accession>
<dbReference type="EMBL" id="X62314">
    <property type="protein sequence ID" value="CAA44193.1"/>
    <property type="molecule type" value="mRNA"/>
</dbReference>
<dbReference type="EMBL" id="M97656">
    <property type="status" value="NOT_ANNOTATED_CDS"/>
    <property type="molecule type" value="mRNA"/>
</dbReference>
<dbReference type="PIR" id="A39297">
    <property type="entry name" value="A39297"/>
</dbReference>
<dbReference type="RefSeq" id="NP_036851.1">
    <property type="nucleotide sequence ID" value="NM_012719.2"/>
</dbReference>
<dbReference type="RefSeq" id="XP_006240177.1">
    <property type="nucleotide sequence ID" value="XM_006240115.4"/>
</dbReference>
<dbReference type="RefSeq" id="XP_063117624.1">
    <property type="nucleotide sequence ID" value="XM_063261554.1"/>
</dbReference>
<dbReference type="SMR" id="P28646"/>
<dbReference type="BioGRID" id="247112">
    <property type="interactions" value="1"/>
</dbReference>
<dbReference type="CORUM" id="P28646"/>
<dbReference type="FunCoup" id="P28646">
    <property type="interactions" value="181"/>
</dbReference>
<dbReference type="STRING" id="10116.ENSRNOP00000067355"/>
<dbReference type="BindingDB" id="P28646"/>
<dbReference type="ChEMBL" id="CHEMBL4652"/>
<dbReference type="DrugCentral" id="P28646"/>
<dbReference type="GuidetoPHARMACOLOGY" id="355"/>
<dbReference type="GlyCosmos" id="P28646">
    <property type="glycosylation" value="3 sites, No reported glycans"/>
</dbReference>
<dbReference type="GlyGen" id="P28646">
    <property type="glycosylation" value="4 sites"/>
</dbReference>
<dbReference type="PhosphoSitePlus" id="P28646"/>
<dbReference type="PaxDb" id="10116-ENSRNOP00000067355"/>
<dbReference type="Ensembl" id="ENSRNOT00000073970.3">
    <property type="protein sequence ID" value="ENSRNOP00000067355.1"/>
    <property type="gene ID" value="ENSRNOG00000048145.3"/>
</dbReference>
<dbReference type="GeneID" id="25033"/>
<dbReference type="KEGG" id="rno:25033"/>
<dbReference type="UCSC" id="RGD:3762">
    <property type="organism name" value="rat"/>
</dbReference>
<dbReference type="AGR" id="RGD:3762"/>
<dbReference type="CTD" id="6751"/>
<dbReference type="RGD" id="3762">
    <property type="gene designation" value="Sstr1"/>
</dbReference>
<dbReference type="eggNOG" id="KOG3656">
    <property type="taxonomic scope" value="Eukaryota"/>
</dbReference>
<dbReference type="GeneTree" id="ENSGT00940000161442"/>
<dbReference type="HOGENOM" id="CLU_009579_8_1_1"/>
<dbReference type="InParanoid" id="P28646"/>
<dbReference type="OMA" id="MVNLAVW"/>
<dbReference type="OrthoDB" id="6076970at2759"/>
<dbReference type="PhylomeDB" id="P28646"/>
<dbReference type="Reactome" id="R-RNO-375276">
    <property type="pathway name" value="Peptide ligand-binding receptors"/>
</dbReference>
<dbReference type="Reactome" id="R-RNO-418594">
    <property type="pathway name" value="G alpha (i) signalling events"/>
</dbReference>
<dbReference type="PRO" id="PR:P28646"/>
<dbReference type="Proteomes" id="UP000002494">
    <property type="component" value="Chromosome 6"/>
</dbReference>
<dbReference type="Bgee" id="ENSRNOG00000048145">
    <property type="expression patterns" value="Expressed in frontal cortex and 8 other cell types or tissues"/>
</dbReference>
<dbReference type="GO" id="GO:0005737">
    <property type="term" value="C:cytoplasm"/>
    <property type="evidence" value="ECO:0000266"/>
    <property type="project" value="RGD"/>
</dbReference>
<dbReference type="GO" id="GO:0038039">
    <property type="term" value="C:G protein-coupled receptor heterodimeric complex"/>
    <property type="evidence" value="ECO:0000266"/>
    <property type="project" value="RGD"/>
</dbReference>
<dbReference type="GO" id="GO:0038038">
    <property type="term" value="C:G protein-coupled receptor homodimeric complex"/>
    <property type="evidence" value="ECO:0000266"/>
    <property type="project" value="RGD"/>
</dbReference>
<dbReference type="GO" id="GO:0016020">
    <property type="term" value="C:membrane"/>
    <property type="evidence" value="ECO:0000266"/>
    <property type="project" value="RGD"/>
</dbReference>
<dbReference type="GO" id="GO:0043005">
    <property type="term" value="C:neuron projection"/>
    <property type="evidence" value="ECO:0000318"/>
    <property type="project" value="GO_Central"/>
</dbReference>
<dbReference type="GO" id="GO:0005886">
    <property type="term" value="C:plasma membrane"/>
    <property type="evidence" value="ECO:0000266"/>
    <property type="project" value="RGD"/>
</dbReference>
<dbReference type="GO" id="GO:0042923">
    <property type="term" value="F:neuropeptide binding"/>
    <property type="evidence" value="ECO:0000318"/>
    <property type="project" value="GO_Central"/>
</dbReference>
<dbReference type="GO" id="GO:0046982">
    <property type="term" value="F:protein heterodimerization activity"/>
    <property type="evidence" value="ECO:0000266"/>
    <property type="project" value="RGD"/>
</dbReference>
<dbReference type="GO" id="GO:0042803">
    <property type="term" value="F:protein homodimerization activity"/>
    <property type="evidence" value="ECO:0000266"/>
    <property type="project" value="RGD"/>
</dbReference>
<dbReference type="GO" id="GO:0004994">
    <property type="term" value="F:somatostatin receptor activity"/>
    <property type="evidence" value="ECO:0000315"/>
    <property type="project" value="RGD"/>
</dbReference>
<dbReference type="GO" id="GO:0071392">
    <property type="term" value="P:cellular response to estradiol stimulus"/>
    <property type="evidence" value="ECO:0000270"/>
    <property type="project" value="RGD"/>
</dbReference>
<dbReference type="GO" id="GO:1990830">
    <property type="term" value="P:cellular response to leukemia inhibitory factor"/>
    <property type="evidence" value="ECO:0000266"/>
    <property type="project" value="RGD"/>
</dbReference>
<dbReference type="GO" id="GO:0021549">
    <property type="term" value="P:cerebellum development"/>
    <property type="evidence" value="ECO:0000270"/>
    <property type="project" value="RGD"/>
</dbReference>
<dbReference type="GO" id="GO:0030900">
    <property type="term" value="P:forebrain development"/>
    <property type="evidence" value="ECO:0000270"/>
    <property type="project" value="RGD"/>
</dbReference>
<dbReference type="GO" id="GO:0007186">
    <property type="term" value="P:G protein-coupled receptor signaling pathway"/>
    <property type="evidence" value="ECO:0000266"/>
    <property type="project" value="RGD"/>
</dbReference>
<dbReference type="GO" id="GO:0007215">
    <property type="term" value="P:glutamate receptor signaling pathway"/>
    <property type="evidence" value="ECO:0000266"/>
    <property type="project" value="RGD"/>
</dbReference>
<dbReference type="GO" id="GO:0060125">
    <property type="term" value="P:negative regulation of growth hormone secretion"/>
    <property type="evidence" value="ECO:0000266"/>
    <property type="project" value="RGD"/>
</dbReference>
<dbReference type="GO" id="GO:0007218">
    <property type="term" value="P:neuropeptide signaling pathway"/>
    <property type="evidence" value="ECO:0000266"/>
    <property type="project" value="RGD"/>
</dbReference>
<dbReference type="GO" id="GO:0042594">
    <property type="term" value="P:response to starvation"/>
    <property type="evidence" value="ECO:0000270"/>
    <property type="project" value="RGD"/>
</dbReference>
<dbReference type="GO" id="GO:0007283">
    <property type="term" value="P:spermatogenesis"/>
    <property type="evidence" value="ECO:0000270"/>
    <property type="project" value="RGD"/>
</dbReference>
<dbReference type="GO" id="GO:0030217">
    <property type="term" value="P:T cell differentiation"/>
    <property type="evidence" value="ECO:0000303"/>
    <property type="project" value="RGD"/>
</dbReference>
<dbReference type="CDD" id="cd15970">
    <property type="entry name" value="7tmA_SSTR1"/>
    <property type="match status" value="1"/>
</dbReference>
<dbReference type="FunFam" id="1.20.1070.10:FF:000060">
    <property type="entry name" value="Somatostatin receptor type 1"/>
    <property type="match status" value="1"/>
</dbReference>
<dbReference type="Gene3D" id="1.20.1070.10">
    <property type="entry name" value="Rhodopsin 7-helix transmembrane proteins"/>
    <property type="match status" value="1"/>
</dbReference>
<dbReference type="InterPro" id="IPR000276">
    <property type="entry name" value="GPCR_Rhodpsn"/>
</dbReference>
<dbReference type="InterPro" id="IPR017452">
    <property type="entry name" value="GPCR_Rhodpsn_7TM"/>
</dbReference>
<dbReference type="InterPro" id="IPR000586">
    <property type="entry name" value="Somatstn_rcpt"/>
</dbReference>
<dbReference type="InterPro" id="IPR001116">
    <property type="entry name" value="Somatstn_rcpt_1"/>
</dbReference>
<dbReference type="PANTHER" id="PTHR24229">
    <property type="entry name" value="NEUROPEPTIDES RECEPTOR"/>
    <property type="match status" value="1"/>
</dbReference>
<dbReference type="PANTHER" id="PTHR24229:SF38">
    <property type="entry name" value="SOMATOSTATIN RECEPTOR TYPE 1"/>
    <property type="match status" value="1"/>
</dbReference>
<dbReference type="Pfam" id="PF00001">
    <property type="entry name" value="7tm_1"/>
    <property type="match status" value="1"/>
</dbReference>
<dbReference type="PRINTS" id="PR00237">
    <property type="entry name" value="GPCRRHODOPSN"/>
</dbReference>
<dbReference type="PRINTS" id="PR00246">
    <property type="entry name" value="SOMATOSTATNR"/>
</dbReference>
<dbReference type="PRINTS" id="PR00587">
    <property type="entry name" value="SOMATOSTTN1R"/>
</dbReference>
<dbReference type="SMART" id="SM01381">
    <property type="entry name" value="7TM_GPCR_Srsx"/>
    <property type="match status" value="1"/>
</dbReference>
<dbReference type="SUPFAM" id="SSF81321">
    <property type="entry name" value="Family A G protein-coupled receptor-like"/>
    <property type="match status" value="1"/>
</dbReference>
<dbReference type="PROSITE" id="PS00237">
    <property type="entry name" value="G_PROTEIN_RECEP_F1_1"/>
    <property type="match status" value="1"/>
</dbReference>
<dbReference type="PROSITE" id="PS50262">
    <property type="entry name" value="G_PROTEIN_RECEP_F1_2"/>
    <property type="match status" value="1"/>
</dbReference>
<sequence>MFPNGTAPSPTSSPSSSPGGCGEGVCSRGPGSGAADGMEEPGRNSSQNGTLSEGQGSAILISFIYSVVCLVGLCGNSMVIYVILRYAKMKTATNIYILNLAIADELLMLSVPFLVTSTLLRHWPFGALLCRLVLSVDAVNMFTSIYCLTVLSVDRYVAVVHPIKAARYRRPTVAKVVNLGVWVLSLLVILPIVVFSRTAANSDGTVACNMLMPEPAQRWLVGFVLYTFLMGFLLPVGAICLCYVLIIAKMRMVALKAGWQQRKRSERKITLMVMMVVMVFVICWMPFYVVQLVNVFAEQDDATVSQLSVILGYANSCANPILYGFLSDNFKRSFQRILCLSWMDNAAEEPVDYYATALKSRAYSVEDFQPENLESGGVFRNGTCASRISTL</sequence>
<protein>
    <recommendedName>
        <fullName>Somatostatin receptor type 1</fullName>
        <shortName>SS-1-R</shortName>
        <shortName>SS1-R</shortName>
        <shortName>SS1R</shortName>
    </recommendedName>
    <alternativeName>
        <fullName>SRIF-2</fullName>
    </alternativeName>
</protein>
<name>SSR1_RAT</name>
<gene>
    <name type="primary">Sstr1</name>
</gene>
<evidence type="ECO:0000255" key="1"/>
<evidence type="ECO:0000255" key="2">
    <source>
        <dbReference type="PROSITE-ProRule" id="PRU00521"/>
    </source>
</evidence>
<evidence type="ECO:0000256" key="3">
    <source>
        <dbReference type="SAM" id="MobiDB-lite"/>
    </source>
</evidence>
<keyword id="KW-1003">Cell membrane</keyword>
<keyword id="KW-1015">Disulfide bond</keyword>
<keyword id="KW-0297">G-protein coupled receptor</keyword>
<keyword id="KW-0325">Glycoprotein</keyword>
<keyword id="KW-0449">Lipoprotein</keyword>
<keyword id="KW-0472">Membrane</keyword>
<keyword id="KW-0564">Palmitate</keyword>
<keyword id="KW-0675">Receptor</keyword>
<keyword id="KW-1185">Reference proteome</keyword>
<keyword id="KW-0807">Transducer</keyword>
<keyword id="KW-0812">Transmembrane</keyword>
<keyword id="KW-1133">Transmembrane helix</keyword>
<feature type="chain" id="PRO_0000070118" description="Somatostatin receptor type 1">
    <location>
        <begin position="1"/>
        <end position="391"/>
    </location>
</feature>
<feature type="topological domain" description="Extracellular" evidence="1">
    <location>
        <begin position="1"/>
        <end position="56"/>
    </location>
</feature>
<feature type="transmembrane region" description="Helical; Name=1" evidence="1">
    <location>
        <begin position="57"/>
        <end position="84"/>
    </location>
</feature>
<feature type="topological domain" description="Cytoplasmic" evidence="1">
    <location>
        <begin position="85"/>
        <end position="94"/>
    </location>
</feature>
<feature type="transmembrane region" description="Helical; Name=2" evidence="1">
    <location>
        <begin position="95"/>
        <end position="120"/>
    </location>
</feature>
<feature type="topological domain" description="Extracellular" evidence="1">
    <location>
        <begin position="121"/>
        <end position="131"/>
    </location>
</feature>
<feature type="transmembrane region" description="Helical; Name=3" evidence="1">
    <location>
        <begin position="132"/>
        <end position="153"/>
    </location>
</feature>
<feature type="topological domain" description="Cytoplasmic" evidence="1">
    <location>
        <begin position="154"/>
        <end position="175"/>
    </location>
</feature>
<feature type="transmembrane region" description="Helical; Name=4" evidence="1">
    <location>
        <begin position="176"/>
        <end position="196"/>
    </location>
</feature>
<feature type="topological domain" description="Extracellular" evidence="1">
    <location>
        <begin position="197"/>
        <end position="219"/>
    </location>
</feature>
<feature type="transmembrane region" description="Helical; Name=5" evidence="1">
    <location>
        <begin position="220"/>
        <end position="244"/>
    </location>
</feature>
<feature type="topological domain" description="Cytoplasmic" evidence="1">
    <location>
        <begin position="245"/>
        <end position="270"/>
    </location>
</feature>
<feature type="transmembrane region" description="Helical; Name=6" evidence="1">
    <location>
        <begin position="271"/>
        <end position="296"/>
    </location>
</feature>
<feature type="topological domain" description="Extracellular" evidence="1">
    <location>
        <begin position="297"/>
        <end position="303"/>
    </location>
</feature>
<feature type="transmembrane region" description="Helical; Name=7" evidence="1">
    <location>
        <begin position="304"/>
        <end position="327"/>
    </location>
</feature>
<feature type="topological domain" description="Cytoplasmic" evidence="1">
    <location>
        <begin position="328"/>
        <end position="391"/>
    </location>
</feature>
<feature type="region of interest" description="Disordered" evidence="3">
    <location>
        <begin position="1"/>
        <end position="50"/>
    </location>
</feature>
<feature type="compositionally biased region" description="Low complexity" evidence="3">
    <location>
        <begin position="8"/>
        <end position="18"/>
    </location>
</feature>
<feature type="lipid moiety-binding region" description="S-palmitoyl cysteine" evidence="1">
    <location>
        <position position="339"/>
    </location>
</feature>
<feature type="glycosylation site" description="N-linked (GlcNAc...) asparagine" evidence="1">
    <location>
        <position position="4"/>
    </location>
</feature>
<feature type="glycosylation site" description="N-linked (GlcNAc...) asparagine" evidence="1">
    <location>
        <position position="44"/>
    </location>
</feature>
<feature type="glycosylation site" description="N-linked (GlcNAc...) asparagine" evidence="1">
    <location>
        <position position="48"/>
    </location>
</feature>
<feature type="disulfide bond" evidence="2">
    <location>
        <begin position="130"/>
        <end position="208"/>
    </location>
</feature>
<reference key="1">
    <citation type="journal article" date="1991" name="DNA Cell Biol.">
        <title>Cloning of a cDNA encoding a novel putative G-protein-coupled receptor expressed in specific rat brain regions.</title>
        <authorList>
            <person name="Meyerhof W."/>
            <person name="Paust H.J."/>
            <person name="Schoenrock C."/>
            <person name="Richter D."/>
        </authorList>
    </citation>
    <scope>NUCLEOTIDE SEQUENCE [MRNA]</scope>
    <source>
        <strain>Wistar</strain>
        <tissue>Brain</tissue>
    </source>
</reference>
<reference key="2">
    <citation type="journal article" date="1992" name="J. Biol. Chem.">
        <title>Cloning and expression of a rat somatostatin receptor enriched in brain.</title>
        <authorList>
            <person name="Li X.-J."/>
            <person name="Forte M.A."/>
            <person name="North R.A."/>
            <person name="Ross C.A."/>
            <person name="Snyder S.H."/>
        </authorList>
    </citation>
    <scope>NUCLEOTIDE SEQUENCE [MRNA]</scope>
    <source>
        <tissue>Brain</tissue>
    </source>
</reference>